<reference key="1">
    <citation type="submission" date="2008-02" db="EMBL/GenBank/DDBJ databases">
        <title>Complete sequence of Haemophilus somnus 2336.</title>
        <authorList>
            <consortium name="US DOE Joint Genome Institute"/>
            <person name="Siddaramappa S."/>
            <person name="Duncan A.J."/>
            <person name="Challacombe J.F."/>
            <person name="Rainey D."/>
            <person name="Gillaspy A.F."/>
            <person name="Carson M."/>
            <person name="Gipson J."/>
            <person name="Gipson M."/>
            <person name="Bruce D."/>
            <person name="Detter J.C."/>
            <person name="Han C.S."/>
            <person name="Land M."/>
            <person name="Tapia R."/>
            <person name="Thompson L.S."/>
            <person name="Orvis J."/>
            <person name="Zaitshik J."/>
            <person name="Barnes G."/>
            <person name="Brettin T.S."/>
            <person name="Dyer D.W."/>
            <person name="Inzana T.J."/>
        </authorList>
    </citation>
    <scope>NUCLEOTIDE SEQUENCE [LARGE SCALE GENOMIC DNA]</scope>
    <source>
        <strain>2336</strain>
    </source>
</reference>
<name>DNLJ_HISS2</name>
<proteinExistence type="inferred from homology"/>
<keyword id="KW-0227">DNA damage</keyword>
<keyword id="KW-0234">DNA repair</keyword>
<keyword id="KW-0235">DNA replication</keyword>
<keyword id="KW-0436">Ligase</keyword>
<keyword id="KW-0460">Magnesium</keyword>
<keyword id="KW-0464">Manganese</keyword>
<keyword id="KW-0479">Metal-binding</keyword>
<keyword id="KW-0520">NAD</keyword>
<keyword id="KW-0862">Zinc</keyword>
<sequence>MIKQQIEELRQLLRHHEYQYHVLDNPQIPDSEYDRLFHQLKALEQQYPEYASENSPTQRVGAKPLSNFAQVKHDIPMLSLDNAFSDEDFFAFVKRIQDRLIHVHHSLTFCCEPKLDGLAVSILYINGQLVQAATRGDGTTGEDITANIRTIRNIPLQLLTDNPPTRLEVRGEVFMSQAGFEKLNKTALAKGEKTFANPRNAAAGSLRQLDPKITGQRPLMLNAYGIGIAEGVELPDTHFARLQWLKSIGIPVNNEIQLCHGIEKVLDFYRTIKQKRSSLGYDIDGTVLKINDIDLQQQLGFISKAPRWAIAYKFPAQEELTILNNVEFQVGRTGAITPVAKLEPVFVAGVTVSNATLHNGDEIARLDIAIGDTVIVRRAGDVIPQIIGVLHERRPENAKSIIFPTNCPVCDSVISKIEGEAVARCTGGLICAAQRKEALKHFVSRKAMDIDGIGAKLIEQLVERELVHTPADLFKLDQVTLMRLERMGAKSAENALASLAKAKKTTLARFIFALGIREVGETTALNLATHFKTLEAFENATFEQLQKVQDVGEVVAKRIRSFWSEPHNVAVVKDLIAQGIHWDNVEVKEVRDNPLKGKTVVLTGTLTKMGRSEAKEYLLQLGCKVSGSVSSKTDFVIAGESAGSKLTKATELGINILSENEFLALLA</sequence>
<feature type="chain" id="PRO_0000380392" description="DNA ligase">
    <location>
        <begin position="1"/>
        <end position="667"/>
    </location>
</feature>
<feature type="domain" description="BRCT" evidence="1">
    <location>
        <begin position="590"/>
        <end position="667"/>
    </location>
</feature>
<feature type="active site" description="N6-AMP-lysine intermediate" evidence="1">
    <location>
        <position position="114"/>
    </location>
</feature>
<feature type="binding site" evidence="1">
    <location>
        <begin position="30"/>
        <end position="34"/>
    </location>
    <ligand>
        <name>NAD(+)</name>
        <dbReference type="ChEBI" id="CHEBI:57540"/>
    </ligand>
</feature>
<feature type="binding site" evidence="1">
    <location>
        <begin position="79"/>
        <end position="80"/>
    </location>
    <ligand>
        <name>NAD(+)</name>
        <dbReference type="ChEBI" id="CHEBI:57540"/>
    </ligand>
</feature>
<feature type="binding site" evidence="1">
    <location>
        <position position="112"/>
    </location>
    <ligand>
        <name>NAD(+)</name>
        <dbReference type="ChEBI" id="CHEBI:57540"/>
    </ligand>
</feature>
<feature type="binding site" evidence="1">
    <location>
        <position position="135"/>
    </location>
    <ligand>
        <name>NAD(+)</name>
        <dbReference type="ChEBI" id="CHEBI:57540"/>
    </ligand>
</feature>
<feature type="binding site" evidence="1">
    <location>
        <position position="172"/>
    </location>
    <ligand>
        <name>NAD(+)</name>
        <dbReference type="ChEBI" id="CHEBI:57540"/>
    </ligand>
</feature>
<feature type="binding site" evidence="1">
    <location>
        <position position="289"/>
    </location>
    <ligand>
        <name>NAD(+)</name>
        <dbReference type="ChEBI" id="CHEBI:57540"/>
    </ligand>
</feature>
<feature type="binding site" evidence="1">
    <location>
        <position position="313"/>
    </location>
    <ligand>
        <name>NAD(+)</name>
        <dbReference type="ChEBI" id="CHEBI:57540"/>
    </ligand>
</feature>
<feature type="binding site" evidence="1">
    <location>
        <position position="407"/>
    </location>
    <ligand>
        <name>Zn(2+)</name>
        <dbReference type="ChEBI" id="CHEBI:29105"/>
    </ligand>
</feature>
<feature type="binding site" evidence="1">
    <location>
        <position position="410"/>
    </location>
    <ligand>
        <name>Zn(2+)</name>
        <dbReference type="ChEBI" id="CHEBI:29105"/>
    </ligand>
</feature>
<feature type="binding site" evidence="1">
    <location>
        <position position="425"/>
    </location>
    <ligand>
        <name>Zn(2+)</name>
        <dbReference type="ChEBI" id="CHEBI:29105"/>
    </ligand>
</feature>
<feature type="binding site" evidence="1">
    <location>
        <position position="431"/>
    </location>
    <ligand>
        <name>Zn(2+)</name>
        <dbReference type="ChEBI" id="CHEBI:29105"/>
    </ligand>
</feature>
<protein>
    <recommendedName>
        <fullName evidence="1">DNA ligase</fullName>
        <ecNumber evidence="1">6.5.1.2</ecNumber>
    </recommendedName>
    <alternativeName>
        <fullName evidence="1">Polydeoxyribonucleotide synthase [NAD(+)]</fullName>
    </alternativeName>
</protein>
<dbReference type="EC" id="6.5.1.2" evidence="1"/>
<dbReference type="EMBL" id="CP000947">
    <property type="protein sequence ID" value="ACA32364.1"/>
    <property type="molecule type" value="Genomic_DNA"/>
</dbReference>
<dbReference type="RefSeq" id="WP_012341530.1">
    <property type="nucleotide sequence ID" value="NC_010519.1"/>
</dbReference>
<dbReference type="SMR" id="B0USD9"/>
<dbReference type="STRING" id="228400.HSM_0700"/>
<dbReference type="GeneID" id="31486986"/>
<dbReference type="KEGG" id="hsm:HSM_0700"/>
<dbReference type="HOGENOM" id="CLU_007764_2_1_6"/>
<dbReference type="GO" id="GO:0005829">
    <property type="term" value="C:cytosol"/>
    <property type="evidence" value="ECO:0007669"/>
    <property type="project" value="TreeGrafter"/>
</dbReference>
<dbReference type="GO" id="GO:0003677">
    <property type="term" value="F:DNA binding"/>
    <property type="evidence" value="ECO:0007669"/>
    <property type="project" value="InterPro"/>
</dbReference>
<dbReference type="GO" id="GO:0003911">
    <property type="term" value="F:DNA ligase (NAD+) activity"/>
    <property type="evidence" value="ECO:0007669"/>
    <property type="project" value="UniProtKB-UniRule"/>
</dbReference>
<dbReference type="GO" id="GO:0046872">
    <property type="term" value="F:metal ion binding"/>
    <property type="evidence" value="ECO:0007669"/>
    <property type="project" value="UniProtKB-KW"/>
</dbReference>
<dbReference type="GO" id="GO:0006281">
    <property type="term" value="P:DNA repair"/>
    <property type="evidence" value="ECO:0007669"/>
    <property type="project" value="UniProtKB-KW"/>
</dbReference>
<dbReference type="GO" id="GO:0006260">
    <property type="term" value="P:DNA replication"/>
    <property type="evidence" value="ECO:0007669"/>
    <property type="project" value="UniProtKB-KW"/>
</dbReference>
<dbReference type="CDD" id="cd17748">
    <property type="entry name" value="BRCT_DNA_ligase_like"/>
    <property type="match status" value="1"/>
</dbReference>
<dbReference type="CDD" id="cd00114">
    <property type="entry name" value="LIGANc"/>
    <property type="match status" value="1"/>
</dbReference>
<dbReference type="FunFam" id="1.10.150.20:FF:000006">
    <property type="entry name" value="DNA ligase"/>
    <property type="match status" value="1"/>
</dbReference>
<dbReference type="FunFam" id="1.10.150.20:FF:000007">
    <property type="entry name" value="DNA ligase"/>
    <property type="match status" value="1"/>
</dbReference>
<dbReference type="FunFam" id="1.10.287.610:FF:000002">
    <property type="entry name" value="DNA ligase"/>
    <property type="match status" value="1"/>
</dbReference>
<dbReference type="FunFam" id="2.40.50.140:FF:000012">
    <property type="entry name" value="DNA ligase"/>
    <property type="match status" value="1"/>
</dbReference>
<dbReference type="FunFam" id="3.30.470.30:FF:000001">
    <property type="entry name" value="DNA ligase"/>
    <property type="match status" value="1"/>
</dbReference>
<dbReference type="FunFam" id="6.20.10.30:FF:000001">
    <property type="entry name" value="DNA ligase"/>
    <property type="match status" value="1"/>
</dbReference>
<dbReference type="Gene3D" id="6.20.10.30">
    <property type="match status" value="1"/>
</dbReference>
<dbReference type="Gene3D" id="1.10.150.20">
    <property type="entry name" value="5' to 3' exonuclease, C-terminal subdomain"/>
    <property type="match status" value="2"/>
</dbReference>
<dbReference type="Gene3D" id="3.40.50.10190">
    <property type="entry name" value="BRCT domain"/>
    <property type="match status" value="1"/>
</dbReference>
<dbReference type="Gene3D" id="3.30.470.30">
    <property type="entry name" value="DNA ligase/mRNA capping enzyme"/>
    <property type="match status" value="1"/>
</dbReference>
<dbReference type="Gene3D" id="1.10.287.610">
    <property type="entry name" value="Helix hairpin bin"/>
    <property type="match status" value="1"/>
</dbReference>
<dbReference type="Gene3D" id="2.40.50.140">
    <property type="entry name" value="Nucleic acid-binding proteins"/>
    <property type="match status" value="1"/>
</dbReference>
<dbReference type="HAMAP" id="MF_01588">
    <property type="entry name" value="DNA_ligase_A"/>
    <property type="match status" value="1"/>
</dbReference>
<dbReference type="InterPro" id="IPR001357">
    <property type="entry name" value="BRCT_dom"/>
</dbReference>
<dbReference type="InterPro" id="IPR036420">
    <property type="entry name" value="BRCT_dom_sf"/>
</dbReference>
<dbReference type="InterPro" id="IPR041663">
    <property type="entry name" value="DisA/LigA_HHH"/>
</dbReference>
<dbReference type="InterPro" id="IPR001679">
    <property type="entry name" value="DNA_ligase"/>
</dbReference>
<dbReference type="InterPro" id="IPR018239">
    <property type="entry name" value="DNA_ligase_AS"/>
</dbReference>
<dbReference type="InterPro" id="IPR033136">
    <property type="entry name" value="DNA_ligase_CS"/>
</dbReference>
<dbReference type="InterPro" id="IPR013839">
    <property type="entry name" value="DNAligase_adenylation"/>
</dbReference>
<dbReference type="InterPro" id="IPR013840">
    <property type="entry name" value="DNAligase_N"/>
</dbReference>
<dbReference type="InterPro" id="IPR003583">
    <property type="entry name" value="Hlx-hairpin-Hlx_DNA-bd_motif"/>
</dbReference>
<dbReference type="InterPro" id="IPR012340">
    <property type="entry name" value="NA-bd_OB-fold"/>
</dbReference>
<dbReference type="InterPro" id="IPR004150">
    <property type="entry name" value="NAD_DNA_ligase_OB"/>
</dbReference>
<dbReference type="InterPro" id="IPR010994">
    <property type="entry name" value="RuvA_2-like"/>
</dbReference>
<dbReference type="InterPro" id="IPR004149">
    <property type="entry name" value="Znf_DNAligase_C4"/>
</dbReference>
<dbReference type="NCBIfam" id="TIGR00575">
    <property type="entry name" value="dnlj"/>
    <property type="match status" value="1"/>
</dbReference>
<dbReference type="NCBIfam" id="NF005932">
    <property type="entry name" value="PRK07956.1"/>
    <property type="match status" value="1"/>
</dbReference>
<dbReference type="PANTHER" id="PTHR23389">
    <property type="entry name" value="CHROMOSOME TRANSMISSION FIDELITY FACTOR 18"/>
    <property type="match status" value="1"/>
</dbReference>
<dbReference type="PANTHER" id="PTHR23389:SF9">
    <property type="entry name" value="DNA LIGASE"/>
    <property type="match status" value="1"/>
</dbReference>
<dbReference type="Pfam" id="PF00533">
    <property type="entry name" value="BRCT"/>
    <property type="match status" value="1"/>
</dbReference>
<dbReference type="Pfam" id="PF01653">
    <property type="entry name" value="DNA_ligase_aden"/>
    <property type="match status" value="1"/>
</dbReference>
<dbReference type="Pfam" id="PF03120">
    <property type="entry name" value="DNA_ligase_OB"/>
    <property type="match status" value="1"/>
</dbReference>
<dbReference type="Pfam" id="PF03119">
    <property type="entry name" value="DNA_ligase_ZBD"/>
    <property type="match status" value="1"/>
</dbReference>
<dbReference type="Pfam" id="PF12826">
    <property type="entry name" value="HHH_2"/>
    <property type="match status" value="1"/>
</dbReference>
<dbReference type="Pfam" id="PF14520">
    <property type="entry name" value="HHH_5"/>
    <property type="match status" value="1"/>
</dbReference>
<dbReference type="Pfam" id="PF22745">
    <property type="entry name" value="Nlig-Ia"/>
    <property type="match status" value="1"/>
</dbReference>
<dbReference type="PIRSF" id="PIRSF001604">
    <property type="entry name" value="LigA"/>
    <property type="match status" value="1"/>
</dbReference>
<dbReference type="SMART" id="SM00292">
    <property type="entry name" value="BRCT"/>
    <property type="match status" value="1"/>
</dbReference>
<dbReference type="SMART" id="SM00278">
    <property type="entry name" value="HhH1"/>
    <property type="match status" value="4"/>
</dbReference>
<dbReference type="SMART" id="SM00532">
    <property type="entry name" value="LIGANc"/>
    <property type="match status" value="1"/>
</dbReference>
<dbReference type="SUPFAM" id="SSF52113">
    <property type="entry name" value="BRCT domain"/>
    <property type="match status" value="1"/>
</dbReference>
<dbReference type="SUPFAM" id="SSF56091">
    <property type="entry name" value="DNA ligase/mRNA capping enzyme, catalytic domain"/>
    <property type="match status" value="1"/>
</dbReference>
<dbReference type="SUPFAM" id="SSF50249">
    <property type="entry name" value="Nucleic acid-binding proteins"/>
    <property type="match status" value="1"/>
</dbReference>
<dbReference type="SUPFAM" id="SSF47781">
    <property type="entry name" value="RuvA domain 2-like"/>
    <property type="match status" value="1"/>
</dbReference>
<dbReference type="PROSITE" id="PS50172">
    <property type="entry name" value="BRCT"/>
    <property type="match status" value="1"/>
</dbReference>
<dbReference type="PROSITE" id="PS01055">
    <property type="entry name" value="DNA_LIGASE_N1"/>
    <property type="match status" value="1"/>
</dbReference>
<dbReference type="PROSITE" id="PS01056">
    <property type="entry name" value="DNA_LIGASE_N2"/>
    <property type="match status" value="1"/>
</dbReference>
<comment type="function">
    <text evidence="1">DNA ligase that catalyzes the formation of phosphodiester linkages between 5'-phosphoryl and 3'-hydroxyl groups in double-stranded DNA using NAD as a coenzyme and as the energy source for the reaction. It is essential for DNA replication and repair of damaged DNA.</text>
</comment>
<comment type="catalytic activity">
    <reaction evidence="1">
        <text>NAD(+) + (deoxyribonucleotide)n-3'-hydroxyl + 5'-phospho-(deoxyribonucleotide)m = (deoxyribonucleotide)n+m + AMP + beta-nicotinamide D-nucleotide.</text>
        <dbReference type="EC" id="6.5.1.2"/>
    </reaction>
</comment>
<comment type="cofactor">
    <cofactor evidence="1">
        <name>Mg(2+)</name>
        <dbReference type="ChEBI" id="CHEBI:18420"/>
    </cofactor>
    <cofactor evidence="1">
        <name>Mn(2+)</name>
        <dbReference type="ChEBI" id="CHEBI:29035"/>
    </cofactor>
</comment>
<comment type="similarity">
    <text evidence="1">Belongs to the NAD-dependent DNA ligase family. LigA subfamily.</text>
</comment>
<accession>B0USD9</accession>
<gene>
    <name evidence="1" type="primary">ligA</name>
    <name type="ordered locus">HSM_0700</name>
</gene>
<organism>
    <name type="scientific">Histophilus somni (strain 2336)</name>
    <name type="common">Haemophilus somnus</name>
    <dbReference type="NCBI Taxonomy" id="228400"/>
    <lineage>
        <taxon>Bacteria</taxon>
        <taxon>Pseudomonadati</taxon>
        <taxon>Pseudomonadota</taxon>
        <taxon>Gammaproteobacteria</taxon>
        <taxon>Pasteurellales</taxon>
        <taxon>Pasteurellaceae</taxon>
        <taxon>Histophilus</taxon>
    </lineage>
</organism>
<evidence type="ECO:0000255" key="1">
    <source>
        <dbReference type="HAMAP-Rule" id="MF_01588"/>
    </source>
</evidence>